<dbReference type="EMBL" id="X04826">
    <property type="protein sequence ID" value="CAA28509.1"/>
    <property type="status" value="ALT_INIT"/>
    <property type="molecule type" value="Genomic_DNA"/>
</dbReference>
<dbReference type="PIR" id="S07168">
    <property type="entry name" value="S07168"/>
</dbReference>
<dbReference type="GO" id="GO:0009507">
    <property type="term" value="C:chloroplast"/>
    <property type="evidence" value="ECO:0007669"/>
    <property type="project" value="UniProtKB-SubCell"/>
</dbReference>
<dbReference type="GO" id="GO:0003723">
    <property type="term" value="F:RNA binding"/>
    <property type="evidence" value="ECO:0007669"/>
    <property type="project" value="UniProtKB-KW"/>
</dbReference>
<dbReference type="GO" id="GO:0006397">
    <property type="term" value="P:mRNA processing"/>
    <property type="evidence" value="ECO:0007669"/>
    <property type="project" value="UniProtKB-KW"/>
</dbReference>
<dbReference type="GO" id="GO:0008380">
    <property type="term" value="P:RNA splicing"/>
    <property type="evidence" value="ECO:0007669"/>
    <property type="project" value="UniProtKB-UniRule"/>
</dbReference>
<dbReference type="GO" id="GO:0008033">
    <property type="term" value="P:tRNA processing"/>
    <property type="evidence" value="ECO:0007669"/>
    <property type="project" value="UniProtKB-KW"/>
</dbReference>
<dbReference type="HAMAP" id="MF_01390">
    <property type="entry name" value="MatK"/>
    <property type="match status" value="1"/>
</dbReference>
<dbReference type="InterPro" id="IPR024937">
    <property type="entry name" value="Domain_X"/>
</dbReference>
<dbReference type="InterPro" id="IPR002866">
    <property type="entry name" value="Maturase_MatK"/>
</dbReference>
<dbReference type="InterPro" id="IPR024942">
    <property type="entry name" value="Maturase_MatK_N"/>
</dbReference>
<dbReference type="PANTHER" id="PTHR34811">
    <property type="entry name" value="MATURASE K"/>
    <property type="match status" value="1"/>
</dbReference>
<dbReference type="PANTHER" id="PTHR34811:SF1">
    <property type="entry name" value="MATURASE K"/>
    <property type="match status" value="1"/>
</dbReference>
<dbReference type="Pfam" id="PF01348">
    <property type="entry name" value="Intron_maturas2"/>
    <property type="match status" value="1"/>
</dbReference>
<dbReference type="Pfam" id="PF01824">
    <property type="entry name" value="MatK_N"/>
    <property type="match status" value="1"/>
</dbReference>
<sequence length="502" mass="60156">MEKFQGYLEFDGARQQSFLYPLFFREYIYVLSYDHGLNRLNRNRSIFLENADYDKKYSSLIVKRLILRMYEQNRLIIPTKDLNTNLGHTNLFYYQMISVLFAVIVEIPFSLRLGSSFEGKNLKKSYNLQSIHSIFPFLEDKFSHFNYVLDVLIPYPIHLEILVQTLRYRVKDASSLHFFRFCLYEYCNWKNFDSKKKSILNPRFFLFLYNSHVCEYESIFFFLRKQSSHLRSTSYEVFFERILFYGKIQHFLKVFVNNFPAILGLLKDPFLHYVRYHGKYILATKDTPLMMNKWKYYFVNLWQCYFSVWFQSQKININQLSKDNFEFLGYFSSLRLNSLVVRSQMLENSFLIDNVRRKLDSNIQISSIIGSLAKDKFCNVLGHPISKATWMDSSDSDILNRFVRICRNISHYYSGSAKKKNLYRIKYILRLCCVKTLARKHKSTVRAFLKRLGSGLLEEFLTGEDQVLSLIFPRSDYASKRLYRVRVWYLDILYLNDLVNHE</sequence>
<reference key="1">
    <citation type="journal article" date="1987" name="Curr. Genet.">
        <title>The chloroplast tRNALys(UUU) gene from mustard (Sinapis alba) contains a class II intron potentially coding for a maturase-related polypeptide.</title>
        <authorList>
            <person name="Neuhaus H."/>
            <person name="Link G."/>
        </authorList>
    </citation>
    <scope>NUCLEOTIDE SEQUENCE [GENOMIC DNA]</scope>
</reference>
<reference key="2">
    <citation type="journal article" date="1995" name="Nucleic Acids Res.">
        <title>RNA-binding activity of the matK protein encoded by the chloroplast trnK intron from mustard (Sinapis alba L.).</title>
        <authorList>
            <person name="Liere K."/>
            <person name="Link G."/>
        </authorList>
    </citation>
    <scope>TRNA-BINDING</scope>
</reference>
<geneLocation type="chloroplast"/>
<feature type="chain" id="PRO_0000143709" description="Maturase K">
    <location>
        <begin position="1"/>
        <end position="502"/>
    </location>
</feature>
<evidence type="ECO:0000255" key="1">
    <source>
        <dbReference type="HAMAP-Rule" id="MF_01390"/>
    </source>
</evidence>
<evidence type="ECO:0000305" key="2"/>
<comment type="function">
    <text evidence="1">Usually encoded in the trnK tRNA gene intron. Probably assists in splicing its own and other chloroplast group II introns (By similarity). Binds its homologous trnK precursor transcript.</text>
</comment>
<comment type="subcellular location">
    <subcellularLocation>
        <location>Plastid</location>
        <location>Chloroplast</location>
    </subcellularLocation>
</comment>
<comment type="similarity">
    <text evidence="1">Belongs to the intron maturase 2 family. MatK subfamily.</text>
</comment>
<comment type="sequence caution" evidence="2">
    <conflict type="erroneous initiation">
        <sequence resource="EMBL-CDS" id="CAA28509"/>
    </conflict>
</comment>
<name>MATK_SINAL</name>
<protein>
    <recommendedName>
        <fullName evidence="1">Maturase K</fullName>
    </recommendedName>
    <alternativeName>
        <fullName evidence="1">Intron maturase</fullName>
    </alternativeName>
</protein>
<accession>P09364</accession>
<organism>
    <name type="scientific">Sinapis alba</name>
    <name type="common">White mustard</name>
    <name type="synonym">Brassica hirta</name>
    <dbReference type="NCBI Taxonomy" id="3728"/>
    <lineage>
        <taxon>Eukaryota</taxon>
        <taxon>Viridiplantae</taxon>
        <taxon>Streptophyta</taxon>
        <taxon>Embryophyta</taxon>
        <taxon>Tracheophyta</taxon>
        <taxon>Spermatophyta</taxon>
        <taxon>Magnoliopsida</taxon>
        <taxon>eudicotyledons</taxon>
        <taxon>Gunneridae</taxon>
        <taxon>Pentapetalae</taxon>
        <taxon>rosids</taxon>
        <taxon>malvids</taxon>
        <taxon>Brassicales</taxon>
        <taxon>Brassicaceae</taxon>
        <taxon>Brassiceae</taxon>
        <taxon>Sinapis</taxon>
    </lineage>
</organism>
<gene>
    <name evidence="1" type="primary">matK</name>
    <name type="synonym">ycf14</name>
</gene>
<proteinExistence type="evidence at protein level"/>
<keyword id="KW-0150">Chloroplast</keyword>
<keyword id="KW-0507">mRNA processing</keyword>
<keyword id="KW-0934">Plastid</keyword>
<keyword id="KW-0694">RNA-binding</keyword>
<keyword id="KW-0819">tRNA processing</keyword>